<protein>
    <recommendedName>
        <fullName evidence="1">5'-nucleotidase SurE</fullName>
        <ecNumber evidence="1">3.1.3.5</ecNumber>
    </recommendedName>
    <alternativeName>
        <fullName evidence="1">Nucleoside 5'-monophosphate phosphohydrolase</fullName>
    </alternativeName>
</protein>
<dbReference type="EC" id="3.1.3.5" evidence="1"/>
<dbReference type="EMBL" id="CP000746">
    <property type="protein sequence ID" value="ABR73937.1"/>
    <property type="molecule type" value="Genomic_DNA"/>
</dbReference>
<dbReference type="RefSeq" id="WP_012072317.1">
    <property type="nucleotide sequence ID" value="NC_009655.1"/>
</dbReference>
<dbReference type="SMR" id="A6VLU0"/>
<dbReference type="STRING" id="339671.Asuc_0562"/>
<dbReference type="KEGG" id="asu:Asuc_0562"/>
<dbReference type="eggNOG" id="COG0496">
    <property type="taxonomic scope" value="Bacteria"/>
</dbReference>
<dbReference type="HOGENOM" id="CLU_045192_1_2_6"/>
<dbReference type="OrthoDB" id="9780815at2"/>
<dbReference type="Proteomes" id="UP000001114">
    <property type="component" value="Chromosome"/>
</dbReference>
<dbReference type="GO" id="GO:0005737">
    <property type="term" value="C:cytoplasm"/>
    <property type="evidence" value="ECO:0007669"/>
    <property type="project" value="UniProtKB-SubCell"/>
</dbReference>
<dbReference type="GO" id="GO:0008254">
    <property type="term" value="F:3'-nucleotidase activity"/>
    <property type="evidence" value="ECO:0007669"/>
    <property type="project" value="TreeGrafter"/>
</dbReference>
<dbReference type="GO" id="GO:0008253">
    <property type="term" value="F:5'-nucleotidase activity"/>
    <property type="evidence" value="ECO:0007669"/>
    <property type="project" value="UniProtKB-UniRule"/>
</dbReference>
<dbReference type="GO" id="GO:0004309">
    <property type="term" value="F:exopolyphosphatase activity"/>
    <property type="evidence" value="ECO:0007669"/>
    <property type="project" value="TreeGrafter"/>
</dbReference>
<dbReference type="GO" id="GO:0046872">
    <property type="term" value="F:metal ion binding"/>
    <property type="evidence" value="ECO:0007669"/>
    <property type="project" value="UniProtKB-UniRule"/>
</dbReference>
<dbReference type="GO" id="GO:0000166">
    <property type="term" value="F:nucleotide binding"/>
    <property type="evidence" value="ECO:0007669"/>
    <property type="project" value="UniProtKB-KW"/>
</dbReference>
<dbReference type="FunFam" id="3.40.1210.10:FF:000001">
    <property type="entry name" value="5'/3'-nucleotidase SurE"/>
    <property type="match status" value="1"/>
</dbReference>
<dbReference type="Gene3D" id="3.40.1210.10">
    <property type="entry name" value="Survival protein SurE-like phosphatase/nucleotidase"/>
    <property type="match status" value="1"/>
</dbReference>
<dbReference type="HAMAP" id="MF_00060">
    <property type="entry name" value="SurE"/>
    <property type="match status" value="1"/>
</dbReference>
<dbReference type="InterPro" id="IPR030048">
    <property type="entry name" value="SurE"/>
</dbReference>
<dbReference type="InterPro" id="IPR002828">
    <property type="entry name" value="SurE-like_Pase/nucleotidase"/>
</dbReference>
<dbReference type="InterPro" id="IPR036523">
    <property type="entry name" value="SurE-like_sf"/>
</dbReference>
<dbReference type="NCBIfam" id="NF001489">
    <property type="entry name" value="PRK00346.1-3"/>
    <property type="match status" value="1"/>
</dbReference>
<dbReference type="NCBIfam" id="NF001490">
    <property type="entry name" value="PRK00346.1-4"/>
    <property type="match status" value="1"/>
</dbReference>
<dbReference type="NCBIfam" id="TIGR00087">
    <property type="entry name" value="surE"/>
    <property type="match status" value="1"/>
</dbReference>
<dbReference type="PANTHER" id="PTHR30457">
    <property type="entry name" value="5'-NUCLEOTIDASE SURE"/>
    <property type="match status" value="1"/>
</dbReference>
<dbReference type="PANTHER" id="PTHR30457:SF12">
    <property type="entry name" value="5'_3'-NUCLEOTIDASE SURE"/>
    <property type="match status" value="1"/>
</dbReference>
<dbReference type="Pfam" id="PF01975">
    <property type="entry name" value="SurE"/>
    <property type="match status" value="1"/>
</dbReference>
<dbReference type="SUPFAM" id="SSF64167">
    <property type="entry name" value="SurE-like"/>
    <property type="match status" value="1"/>
</dbReference>
<reference key="1">
    <citation type="journal article" date="2010" name="BMC Genomics">
        <title>A genomic perspective on the potential of Actinobacillus succinogenes for industrial succinate production.</title>
        <authorList>
            <person name="McKinlay J.B."/>
            <person name="Laivenieks M."/>
            <person name="Schindler B.D."/>
            <person name="McKinlay A.A."/>
            <person name="Siddaramappa S."/>
            <person name="Challacombe J.F."/>
            <person name="Lowry S.R."/>
            <person name="Clum A."/>
            <person name="Lapidus A.L."/>
            <person name="Burkhart K.B."/>
            <person name="Harkins V."/>
            <person name="Vieille C."/>
        </authorList>
    </citation>
    <scope>NUCLEOTIDE SEQUENCE [LARGE SCALE GENOMIC DNA]</scope>
    <source>
        <strain>ATCC 55618 / DSM 22257 / CCUG 43843 / 130Z</strain>
    </source>
</reference>
<evidence type="ECO:0000255" key="1">
    <source>
        <dbReference type="HAMAP-Rule" id="MF_00060"/>
    </source>
</evidence>
<keyword id="KW-0963">Cytoplasm</keyword>
<keyword id="KW-0378">Hydrolase</keyword>
<keyword id="KW-0479">Metal-binding</keyword>
<keyword id="KW-0547">Nucleotide-binding</keyword>
<keyword id="KW-1185">Reference proteome</keyword>
<name>SURE_ACTSZ</name>
<gene>
    <name evidence="1" type="primary">surE</name>
    <name type="ordered locus">Asuc_0562</name>
</gene>
<proteinExistence type="inferred from homology"/>
<feature type="chain" id="PRO_1000071157" description="5'-nucleotidase SurE">
    <location>
        <begin position="1"/>
        <end position="246"/>
    </location>
</feature>
<feature type="binding site" evidence="1">
    <location>
        <position position="8"/>
    </location>
    <ligand>
        <name>a divalent metal cation</name>
        <dbReference type="ChEBI" id="CHEBI:60240"/>
    </ligand>
</feature>
<feature type="binding site" evidence="1">
    <location>
        <position position="9"/>
    </location>
    <ligand>
        <name>a divalent metal cation</name>
        <dbReference type="ChEBI" id="CHEBI:60240"/>
    </ligand>
</feature>
<feature type="binding site" evidence="1">
    <location>
        <position position="39"/>
    </location>
    <ligand>
        <name>a divalent metal cation</name>
        <dbReference type="ChEBI" id="CHEBI:60240"/>
    </ligand>
</feature>
<feature type="binding site" evidence="1">
    <location>
        <position position="91"/>
    </location>
    <ligand>
        <name>a divalent metal cation</name>
        <dbReference type="ChEBI" id="CHEBI:60240"/>
    </ligand>
</feature>
<accession>A6VLU0</accession>
<comment type="function">
    <text evidence="1">Nucleotidase that shows phosphatase activity on nucleoside 5'-monophosphates.</text>
</comment>
<comment type="catalytic activity">
    <reaction evidence="1">
        <text>a ribonucleoside 5'-phosphate + H2O = a ribonucleoside + phosphate</text>
        <dbReference type="Rhea" id="RHEA:12484"/>
        <dbReference type="ChEBI" id="CHEBI:15377"/>
        <dbReference type="ChEBI" id="CHEBI:18254"/>
        <dbReference type="ChEBI" id="CHEBI:43474"/>
        <dbReference type="ChEBI" id="CHEBI:58043"/>
        <dbReference type="EC" id="3.1.3.5"/>
    </reaction>
</comment>
<comment type="cofactor">
    <cofactor evidence="1">
        <name>a divalent metal cation</name>
        <dbReference type="ChEBI" id="CHEBI:60240"/>
    </cofactor>
    <text evidence="1">Binds 1 divalent metal cation per subunit.</text>
</comment>
<comment type="subcellular location">
    <subcellularLocation>
        <location evidence="1">Cytoplasm</location>
    </subcellularLocation>
</comment>
<comment type="similarity">
    <text evidence="1">Belongs to the SurE nucleotidase family.</text>
</comment>
<organism>
    <name type="scientific">Actinobacillus succinogenes (strain ATCC 55618 / DSM 22257 / CCUG 43843 / 130Z)</name>
    <dbReference type="NCBI Taxonomy" id="339671"/>
    <lineage>
        <taxon>Bacteria</taxon>
        <taxon>Pseudomonadati</taxon>
        <taxon>Pseudomonadota</taxon>
        <taxon>Gammaproteobacteria</taxon>
        <taxon>Pasteurellales</taxon>
        <taxon>Pasteurellaceae</taxon>
        <taxon>Actinobacillus</taxon>
    </lineage>
</organism>
<sequence length="246" mass="26701">MNILLSNDDGYHAEGIQTLATYLRKFANVVIVAPDRNRSAASSSLTLVEPLRPRQLDNRDYCINGTPADCVHLALNGFLSGRVDLVVSGINAGVNLGDDTLYSGTLAAALEGRHLGLPAIAVSLDGRQHYESAAKIVCDLIPKLHGQLLKSREILNINVPDLPYENLKGLKVCRLGHRSSAAEVIKQADPRGEAIYWIGPAGLPEDEAEGTDFHAVQQGYVSITPIQPDLTAHHSLRSLQTWLEQE</sequence>